<reference key="1">
    <citation type="journal article" date="2006" name="Proc. Natl. Acad. Sci. U.S.A.">
        <title>The partitioned Rhizobium etli genome: genetic and metabolic redundancy in seven interacting replicons.</title>
        <authorList>
            <person name="Gonzalez V."/>
            <person name="Santamaria R.I."/>
            <person name="Bustos P."/>
            <person name="Hernandez-Gonzalez I."/>
            <person name="Medrano-Soto A."/>
            <person name="Moreno-Hagelsieb G."/>
            <person name="Janga S.C."/>
            <person name="Ramirez M.A."/>
            <person name="Jimenez-Jacinto V."/>
            <person name="Collado-Vides J."/>
            <person name="Davila G."/>
        </authorList>
    </citation>
    <scope>NUCLEOTIDE SEQUENCE [LARGE SCALE GENOMIC DNA]</scope>
    <source>
        <strain>ATCC 51251 / DSM 11541 / JCM 21823 / NBRC 15573 / CFN 42</strain>
    </source>
</reference>
<proteinExistence type="inferred from homology"/>
<keyword id="KW-1185">Reference proteome</keyword>
<keyword id="KW-0687">Ribonucleoprotein</keyword>
<keyword id="KW-0689">Ribosomal protein</keyword>
<keyword id="KW-0694">RNA-binding</keyword>
<keyword id="KW-0699">rRNA-binding</keyword>
<dbReference type="EMBL" id="CP000133">
    <property type="protein sequence ID" value="ABC90243.1"/>
    <property type="molecule type" value="Genomic_DNA"/>
</dbReference>
<dbReference type="RefSeq" id="WP_011424774.1">
    <property type="nucleotide sequence ID" value="NC_007761.1"/>
</dbReference>
<dbReference type="SMR" id="Q2KA93"/>
<dbReference type="KEGG" id="ret:RHE_CH01440"/>
<dbReference type="eggNOG" id="COG0360">
    <property type="taxonomic scope" value="Bacteria"/>
</dbReference>
<dbReference type="HOGENOM" id="CLU_113441_2_0_5"/>
<dbReference type="OrthoDB" id="9812702at2"/>
<dbReference type="Proteomes" id="UP000001936">
    <property type="component" value="Chromosome"/>
</dbReference>
<dbReference type="GO" id="GO:0022627">
    <property type="term" value="C:cytosolic small ribosomal subunit"/>
    <property type="evidence" value="ECO:0007669"/>
    <property type="project" value="TreeGrafter"/>
</dbReference>
<dbReference type="GO" id="GO:0070181">
    <property type="term" value="F:small ribosomal subunit rRNA binding"/>
    <property type="evidence" value="ECO:0007669"/>
    <property type="project" value="TreeGrafter"/>
</dbReference>
<dbReference type="GO" id="GO:0003735">
    <property type="term" value="F:structural constituent of ribosome"/>
    <property type="evidence" value="ECO:0007669"/>
    <property type="project" value="InterPro"/>
</dbReference>
<dbReference type="GO" id="GO:0006412">
    <property type="term" value="P:translation"/>
    <property type="evidence" value="ECO:0007669"/>
    <property type="project" value="UniProtKB-UniRule"/>
</dbReference>
<dbReference type="CDD" id="cd00473">
    <property type="entry name" value="bS6"/>
    <property type="match status" value="1"/>
</dbReference>
<dbReference type="Gene3D" id="3.30.70.60">
    <property type="match status" value="1"/>
</dbReference>
<dbReference type="HAMAP" id="MF_00360">
    <property type="entry name" value="Ribosomal_bS6"/>
    <property type="match status" value="1"/>
</dbReference>
<dbReference type="InterPro" id="IPR000529">
    <property type="entry name" value="Ribosomal_bS6"/>
</dbReference>
<dbReference type="InterPro" id="IPR035980">
    <property type="entry name" value="Ribosomal_bS6_sf"/>
</dbReference>
<dbReference type="InterPro" id="IPR020814">
    <property type="entry name" value="Ribosomal_S6_plastid/chlpt"/>
</dbReference>
<dbReference type="InterPro" id="IPR014717">
    <property type="entry name" value="Transl_elong_EF1B/ribsomal_bS6"/>
</dbReference>
<dbReference type="NCBIfam" id="TIGR00166">
    <property type="entry name" value="S6"/>
    <property type="match status" value="1"/>
</dbReference>
<dbReference type="PANTHER" id="PTHR21011">
    <property type="entry name" value="MITOCHONDRIAL 28S RIBOSOMAL PROTEIN S6"/>
    <property type="match status" value="1"/>
</dbReference>
<dbReference type="PANTHER" id="PTHR21011:SF1">
    <property type="entry name" value="SMALL RIBOSOMAL SUBUNIT PROTEIN BS6M"/>
    <property type="match status" value="1"/>
</dbReference>
<dbReference type="Pfam" id="PF01250">
    <property type="entry name" value="Ribosomal_S6"/>
    <property type="match status" value="1"/>
</dbReference>
<dbReference type="SUPFAM" id="SSF54995">
    <property type="entry name" value="Ribosomal protein S6"/>
    <property type="match status" value="1"/>
</dbReference>
<comment type="function">
    <text evidence="1">Binds together with bS18 to 16S ribosomal RNA.</text>
</comment>
<comment type="similarity">
    <text evidence="1">Belongs to the bacterial ribosomal protein bS6 family.</text>
</comment>
<gene>
    <name evidence="1" type="primary">rpsF</name>
    <name type="ordered locus">RHE_CH01440</name>
</gene>
<feature type="chain" id="PRO_1000005326" description="Small ribosomal subunit protein bS6">
    <location>
        <begin position="1"/>
        <end position="152"/>
    </location>
</feature>
<feature type="region of interest" description="Disordered" evidence="2">
    <location>
        <begin position="96"/>
        <end position="152"/>
    </location>
</feature>
<sequence length="152" mass="17542">MALYEHVFLARQDISAQQVDALVEQYKGVIEANGGKVGRIENWGLKSLTYRIKKNRKAHYALMDIDAPPAAIQEMERQMRISEDVLRYMTIAVEKHEEGPSAMLQKRDRDDRGPREGGDRGPRREFGDRPPRRDGDFQRGPRPDRAPREDRA</sequence>
<organism>
    <name type="scientific">Rhizobium etli (strain ATCC 51251 / DSM 11541 / JCM 21823 / NBRC 15573 / CFN 42)</name>
    <dbReference type="NCBI Taxonomy" id="347834"/>
    <lineage>
        <taxon>Bacteria</taxon>
        <taxon>Pseudomonadati</taxon>
        <taxon>Pseudomonadota</taxon>
        <taxon>Alphaproteobacteria</taxon>
        <taxon>Hyphomicrobiales</taxon>
        <taxon>Rhizobiaceae</taxon>
        <taxon>Rhizobium/Agrobacterium group</taxon>
        <taxon>Rhizobium</taxon>
    </lineage>
</organism>
<accession>Q2KA93</accession>
<protein>
    <recommendedName>
        <fullName evidence="1">Small ribosomal subunit protein bS6</fullName>
    </recommendedName>
    <alternativeName>
        <fullName evidence="3">30S ribosomal protein S6</fullName>
    </alternativeName>
</protein>
<evidence type="ECO:0000255" key="1">
    <source>
        <dbReference type="HAMAP-Rule" id="MF_00360"/>
    </source>
</evidence>
<evidence type="ECO:0000256" key="2">
    <source>
        <dbReference type="SAM" id="MobiDB-lite"/>
    </source>
</evidence>
<evidence type="ECO:0000305" key="3"/>
<name>RS6_RHIEC</name>